<feature type="chain" id="PRO_0000319664" description="Phosphoribosyl-ATP pyrophosphatase">
    <location>
        <begin position="1"/>
        <end position="87"/>
    </location>
</feature>
<protein>
    <recommendedName>
        <fullName evidence="1">Phosphoribosyl-ATP pyrophosphatase</fullName>
        <shortName evidence="1">PRA-PH</shortName>
        <ecNumber evidence="1">3.6.1.31</ecNumber>
    </recommendedName>
</protein>
<dbReference type="EC" id="3.6.1.31" evidence="1"/>
<dbReference type="EMBL" id="CP000159">
    <property type="protein sequence ID" value="ABC44128.1"/>
    <property type="molecule type" value="Genomic_DNA"/>
</dbReference>
<dbReference type="RefSeq" id="WP_011403497.1">
    <property type="nucleotide sequence ID" value="NC_007677.1"/>
</dbReference>
<dbReference type="RefSeq" id="YP_444866.1">
    <property type="nucleotide sequence ID" value="NC_007677.1"/>
</dbReference>
<dbReference type="SMR" id="Q2S4L5"/>
<dbReference type="STRING" id="309807.SRU_0728"/>
<dbReference type="EnsemblBacteria" id="ABC44128">
    <property type="protein sequence ID" value="ABC44128"/>
    <property type="gene ID" value="SRU_0728"/>
</dbReference>
<dbReference type="KEGG" id="sru:SRU_0728"/>
<dbReference type="PATRIC" id="fig|309807.25.peg.749"/>
<dbReference type="eggNOG" id="COG0140">
    <property type="taxonomic scope" value="Bacteria"/>
</dbReference>
<dbReference type="HOGENOM" id="CLU_123337_2_1_10"/>
<dbReference type="OrthoDB" id="9814738at2"/>
<dbReference type="UniPathway" id="UPA00031">
    <property type="reaction ID" value="UER00007"/>
</dbReference>
<dbReference type="Proteomes" id="UP000008674">
    <property type="component" value="Chromosome"/>
</dbReference>
<dbReference type="GO" id="GO:0005737">
    <property type="term" value="C:cytoplasm"/>
    <property type="evidence" value="ECO:0007669"/>
    <property type="project" value="UniProtKB-SubCell"/>
</dbReference>
<dbReference type="GO" id="GO:0005524">
    <property type="term" value="F:ATP binding"/>
    <property type="evidence" value="ECO:0007669"/>
    <property type="project" value="UniProtKB-KW"/>
</dbReference>
<dbReference type="GO" id="GO:0004636">
    <property type="term" value="F:phosphoribosyl-ATP diphosphatase activity"/>
    <property type="evidence" value="ECO:0007669"/>
    <property type="project" value="UniProtKB-UniRule"/>
</dbReference>
<dbReference type="GO" id="GO:0000105">
    <property type="term" value="P:L-histidine biosynthetic process"/>
    <property type="evidence" value="ECO:0007669"/>
    <property type="project" value="UniProtKB-UniRule"/>
</dbReference>
<dbReference type="CDD" id="cd11547">
    <property type="entry name" value="NTP-PPase_HisE"/>
    <property type="match status" value="1"/>
</dbReference>
<dbReference type="Gene3D" id="1.10.287.1080">
    <property type="entry name" value="MazG-like"/>
    <property type="match status" value="1"/>
</dbReference>
<dbReference type="HAMAP" id="MF_01020">
    <property type="entry name" value="HisE"/>
    <property type="match status" value="1"/>
</dbReference>
<dbReference type="InterPro" id="IPR008179">
    <property type="entry name" value="HisE"/>
</dbReference>
<dbReference type="InterPro" id="IPR021130">
    <property type="entry name" value="PRib-ATP_PPHydrolase-like"/>
</dbReference>
<dbReference type="NCBIfam" id="TIGR03188">
    <property type="entry name" value="histidine_hisI"/>
    <property type="match status" value="1"/>
</dbReference>
<dbReference type="NCBIfam" id="NF001610">
    <property type="entry name" value="PRK00400.1-1"/>
    <property type="match status" value="1"/>
</dbReference>
<dbReference type="PANTHER" id="PTHR42945">
    <property type="entry name" value="HISTIDINE BIOSYNTHESIS BIFUNCTIONAL PROTEIN"/>
    <property type="match status" value="1"/>
</dbReference>
<dbReference type="PANTHER" id="PTHR42945:SF1">
    <property type="entry name" value="HISTIDINE BIOSYNTHESIS BIFUNCTIONAL PROTEIN HIS7"/>
    <property type="match status" value="1"/>
</dbReference>
<dbReference type="Pfam" id="PF01503">
    <property type="entry name" value="PRA-PH"/>
    <property type="match status" value="1"/>
</dbReference>
<dbReference type="SUPFAM" id="SSF101386">
    <property type="entry name" value="all-alpha NTP pyrophosphatases"/>
    <property type="match status" value="1"/>
</dbReference>
<organism>
    <name type="scientific">Salinibacter ruber (strain DSM 13855 / M31)</name>
    <dbReference type="NCBI Taxonomy" id="309807"/>
    <lineage>
        <taxon>Bacteria</taxon>
        <taxon>Pseudomonadati</taxon>
        <taxon>Rhodothermota</taxon>
        <taxon>Rhodothermia</taxon>
        <taxon>Rhodothermales</taxon>
        <taxon>Salinibacteraceae</taxon>
        <taxon>Salinibacter</taxon>
    </lineage>
</organism>
<sequence>MKRFEELFAELADKVDRQDPDSGTVQAVQEGRHAIGKKVIEEAGEVWMAAEHEGPDRTAEEISQLLYHLQVLMIACDLDLEDVYEHL</sequence>
<accession>Q2S4L5</accession>
<keyword id="KW-0028">Amino-acid biosynthesis</keyword>
<keyword id="KW-0067">ATP-binding</keyword>
<keyword id="KW-0963">Cytoplasm</keyword>
<keyword id="KW-0368">Histidine biosynthesis</keyword>
<keyword id="KW-0378">Hydrolase</keyword>
<keyword id="KW-0547">Nucleotide-binding</keyword>
<keyword id="KW-1185">Reference proteome</keyword>
<reference key="1">
    <citation type="journal article" date="2005" name="Proc. Natl. Acad. Sci. U.S.A.">
        <title>The genome of Salinibacter ruber: convergence and gene exchange among hyperhalophilic bacteria and archaea.</title>
        <authorList>
            <person name="Mongodin E.F."/>
            <person name="Nelson K.E."/>
            <person name="Daugherty S."/>
            <person name="DeBoy R.T."/>
            <person name="Wister J."/>
            <person name="Khouri H."/>
            <person name="Weidman J."/>
            <person name="Walsh D.A."/>
            <person name="Papke R.T."/>
            <person name="Sanchez Perez G."/>
            <person name="Sharma A.K."/>
            <person name="Nesbo C.L."/>
            <person name="MacLeod D."/>
            <person name="Bapteste E."/>
            <person name="Doolittle W.F."/>
            <person name="Charlebois R.L."/>
            <person name="Legault B."/>
            <person name="Rodriguez-Valera F."/>
        </authorList>
    </citation>
    <scope>NUCLEOTIDE SEQUENCE [LARGE SCALE GENOMIC DNA]</scope>
    <source>
        <strain>DSM 13855 / CECT 5946 / M31</strain>
    </source>
</reference>
<gene>
    <name evidence="1" type="primary">hisE</name>
    <name type="ordered locus">SRU_0728</name>
</gene>
<name>HIS2_SALRD</name>
<evidence type="ECO:0000255" key="1">
    <source>
        <dbReference type="HAMAP-Rule" id="MF_01020"/>
    </source>
</evidence>
<comment type="catalytic activity">
    <reaction evidence="1">
        <text>1-(5-phospho-beta-D-ribosyl)-ATP + H2O = 1-(5-phospho-beta-D-ribosyl)-5'-AMP + diphosphate + H(+)</text>
        <dbReference type="Rhea" id="RHEA:22828"/>
        <dbReference type="ChEBI" id="CHEBI:15377"/>
        <dbReference type="ChEBI" id="CHEBI:15378"/>
        <dbReference type="ChEBI" id="CHEBI:33019"/>
        <dbReference type="ChEBI" id="CHEBI:59457"/>
        <dbReference type="ChEBI" id="CHEBI:73183"/>
        <dbReference type="EC" id="3.6.1.31"/>
    </reaction>
</comment>
<comment type="pathway">
    <text evidence="1">Amino-acid biosynthesis; L-histidine biosynthesis; L-histidine from 5-phospho-alpha-D-ribose 1-diphosphate: step 2/9.</text>
</comment>
<comment type="subcellular location">
    <subcellularLocation>
        <location evidence="1">Cytoplasm</location>
    </subcellularLocation>
</comment>
<comment type="similarity">
    <text evidence="1">Belongs to the PRA-PH family.</text>
</comment>
<proteinExistence type="inferred from homology"/>